<protein>
    <recommendedName>
        <fullName>Altered inheritance of mitochondria protein 32</fullName>
    </recommendedName>
</protein>
<gene>
    <name type="primary">AIM32</name>
    <name type="ORF">SCY_4129</name>
</gene>
<proteinExistence type="inferred from homology"/>
<name>AIM32_YEAS7</name>
<organism>
    <name type="scientific">Saccharomyces cerevisiae (strain YJM789)</name>
    <name type="common">Baker's yeast</name>
    <dbReference type="NCBI Taxonomy" id="307796"/>
    <lineage>
        <taxon>Eukaryota</taxon>
        <taxon>Fungi</taxon>
        <taxon>Dikarya</taxon>
        <taxon>Ascomycota</taxon>
        <taxon>Saccharomycotina</taxon>
        <taxon>Saccharomycetes</taxon>
        <taxon>Saccharomycetales</taxon>
        <taxon>Saccharomycetaceae</taxon>
        <taxon>Saccharomyces</taxon>
    </lineage>
</organism>
<dbReference type="EMBL" id="AAFW02000020">
    <property type="protein sequence ID" value="EDN64347.1"/>
    <property type="molecule type" value="Genomic_DNA"/>
</dbReference>
<dbReference type="SMR" id="A6ZM17"/>
<dbReference type="HOGENOM" id="CLU_044499_1_0_1"/>
<dbReference type="Proteomes" id="UP000007060">
    <property type="component" value="Unassembled WGS sequence"/>
</dbReference>
<dbReference type="CDD" id="cd03062">
    <property type="entry name" value="TRX_Fd_Sucrase"/>
    <property type="match status" value="1"/>
</dbReference>
<dbReference type="InterPro" id="IPR009737">
    <property type="entry name" value="Aim32/Apd1-like"/>
</dbReference>
<dbReference type="InterPro" id="IPR036249">
    <property type="entry name" value="Thioredoxin-like_sf"/>
</dbReference>
<dbReference type="PANTHER" id="PTHR31902">
    <property type="entry name" value="ACTIN PATCHES DISTAL PROTEIN 1"/>
    <property type="match status" value="1"/>
</dbReference>
<dbReference type="PANTHER" id="PTHR31902:SF7">
    <property type="entry name" value="ALTERED INHERITANCE OF MITOCHONDRIA PROTEIN 32"/>
    <property type="match status" value="1"/>
</dbReference>
<dbReference type="Pfam" id="PF06999">
    <property type="entry name" value="Suc_Fer-like"/>
    <property type="match status" value="1"/>
</dbReference>
<dbReference type="SUPFAM" id="SSF52833">
    <property type="entry name" value="Thioredoxin-like"/>
    <property type="match status" value="1"/>
</dbReference>
<accession>A6ZM17</accession>
<sequence length="311" mass="35977">MLRITVKTLQQRASFHHSFKHISVPDLHTRAQNDQTNCYCQEINARLPSKTDPLDPHIKLPHRTPNYNKHVLLLSPGDRFAQPWKVAWNHNLDTNTNRPYNAISKLRSHLGGSPGILINAVHLQNEFIPRPKQHDEWLYFFVIPDMKLYVIKETDIEEFASFLDEGAIQAPKLSFQDYLSGKAKASQQVHEVHHRKLTRFQGETFLRDWNLVCGHYKRDAKCGEMGPDIIAAFQDEKLFPENNLALISHIGGHIFAGNVIFYKLFGREKMQNKLDSLWFGKVYPHNLKLLCENLENGKIIDEMYRGGISMN</sequence>
<reference key="1">
    <citation type="journal article" date="2007" name="Proc. Natl. Acad. Sci. U.S.A.">
        <title>Genome sequencing and comparative analysis of Saccharomyces cerevisiae strain YJM789.</title>
        <authorList>
            <person name="Wei W."/>
            <person name="McCusker J.H."/>
            <person name="Hyman R.W."/>
            <person name="Jones T."/>
            <person name="Ning Y."/>
            <person name="Cao Z."/>
            <person name="Gu Z."/>
            <person name="Bruno D."/>
            <person name="Miranda M."/>
            <person name="Nguyen M."/>
            <person name="Wilhelmy J."/>
            <person name="Komp C."/>
            <person name="Tamse R."/>
            <person name="Wang X."/>
            <person name="Jia P."/>
            <person name="Luedi P."/>
            <person name="Oefner P.J."/>
            <person name="David L."/>
            <person name="Dietrich F.S."/>
            <person name="Li Y."/>
            <person name="Davis R.W."/>
            <person name="Steinmetz L.M."/>
        </authorList>
    </citation>
    <scope>NUCLEOTIDE SEQUENCE [LARGE SCALE GENOMIC DNA]</scope>
    <source>
        <strain>YJM789</strain>
    </source>
</reference>
<comment type="similarity">
    <text evidence="1">Belongs to the AIM32 family.</text>
</comment>
<evidence type="ECO:0000305" key="1"/>
<feature type="chain" id="PRO_0000399705" description="Altered inheritance of mitochondria protein 32">
    <location>
        <begin position="1"/>
        <end position="311"/>
    </location>
</feature>